<reference key="1">
    <citation type="journal article" date="2011" name="PLoS Genet.">
        <title>The evolution of host specialization in the vertebrate gut symbiont Lactobacillus reuteri.</title>
        <authorList>
            <person name="Frese S.A."/>
            <person name="Benson A.K."/>
            <person name="Tannock G.W."/>
            <person name="Loach D.M."/>
            <person name="Kim J."/>
            <person name="Zhang M."/>
            <person name="Oh P.L."/>
            <person name="Heng N.C."/>
            <person name="Patil P.B."/>
            <person name="Juge N."/>
            <person name="Mackenzie D.A."/>
            <person name="Pearson B.M."/>
            <person name="Lapidus A."/>
            <person name="Dalin E."/>
            <person name="Tice H."/>
            <person name="Goltsman E."/>
            <person name="Land M."/>
            <person name="Hauser L."/>
            <person name="Ivanova N."/>
            <person name="Kyrpides N.C."/>
            <person name="Walter J."/>
        </authorList>
    </citation>
    <scope>NUCLEOTIDE SEQUENCE [LARGE SCALE GENOMIC DNA]</scope>
    <source>
        <strain>DSM 20016</strain>
    </source>
</reference>
<organism>
    <name type="scientific">Limosilactobacillus reuteri (strain DSM 20016)</name>
    <name type="common">Lactobacillus reuteri</name>
    <dbReference type="NCBI Taxonomy" id="557436"/>
    <lineage>
        <taxon>Bacteria</taxon>
        <taxon>Bacillati</taxon>
        <taxon>Bacillota</taxon>
        <taxon>Bacilli</taxon>
        <taxon>Lactobacillales</taxon>
        <taxon>Lactobacillaceae</taxon>
        <taxon>Limosilactobacillus</taxon>
    </lineage>
</organism>
<gene>
    <name evidence="1" type="primary">metK</name>
    <name type="ordered locus">Lreu_1296</name>
</gene>
<dbReference type="EC" id="2.5.1.6" evidence="1"/>
<dbReference type="EMBL" id="CP000705">
    <property type="protein sequence ID" value="ABQ83553.1"/>
    <property type="molecule type" value="Genomic_DNA"/>
</dbReference>
<dbReference type="RefSeq" id="WP_003668547.1">
    <property type="nucleotide sequence ID" value="NC_009513.1"/>
</dbReference>
<dbReference type="SMR" id="A5VL29"/>
<dbReference type="STRING" id="557436.Lreu_1296"/>
<dbReference type="KEGG" id="lre:Lreu_1296"/>
<dbReference type="PATRIC" id="fig|557436.17.peg.567"/>
<dbReference type="eggNOG" id="COG0192">
    <property type="taxonomic scope" value="Bacteria"/>
</dbReference>
<dbReference type="HOGENOM" id="CLU_041802_1_1_9"/>
<dbReference type="UniPathway" id="UPA00315">
    <property type="reaction ID" value="UER00080"/>
</dbReference>
<dbReference type="Proteomes" id="UP000001991">
    <property type="component" value="Chromosome"/>
</dbReference>
<dbReference type="GO" id="GO:0005737">
    <property type="term" value="C:cytoplasm"/>
    <property type="evidence" value="ECO:0007669"/>
    <property type="project" value="UniProtKB-SubCell"/>
</dbReference>
<dbReference type="GO" id="GO:0005524">
    <property type="term" value="F:ATP binding"/>
    <property type="evidence" value="ECO:0007669"/>
    <property type="project" value="UniProtKB-UniRule"/>
</dbReference>
<dbReference type="GO" id="GO:0000287">
    <property type="term" value="F:magnesium ion binding"/>
    <property type="evidence" value="ECO:0007669"/>
    <property type="project" value="UniProtKB-UniRule"/>
</dbReference>
<dbReference type="GO" id="GO:0004478">
    <property type="term" value="F:methionine adenosyltransferase activity"/>
    <property type="evidence" value="ECO:0007669"/>
    <property type="project" value="UniProtKB-UniRule"/>
</dbReference>
<dbReference type="GO" id="GO:0006730">
    <property type="term" value="P:one-carbon metabolic process"/>
    <property type="evidence" value="ECO:0007669"/>
    <property type="project" value="UniProtKB-KW"/>
</dbReference>
<dbReference type="GO" id="GO:0006556">
    <property type="term" value="P:S-adenosylmethionine biosynthetic process"/>
    <property type="evidence" value="ECO:0007669"/>
    <property type="project" value="UniProtKB-UniRule"/>
</dbReference>
<dbReference type="CDD" id="cd18079">
    <property type="entry name" value="S-AdoMet_synt"/>
    <property type="match status" value="1"/>
</dbReference>
<dbReference type="FunFam" id="3.30.300.10:FF:000003">
    <property type="entry name" value="S-adenosylmethionine synthase"/>
    <property type="match status" value="1"/>
</dbReference>
<dbReference type="FunFam" id="3.30.300.10:FF:000004">
    <property type="entry name" value="S-adenosylmethionine synthase"/>
    <property type="match status" value="1"/>
</dbReference>
<dbReference type="FunFam" id="3.30.300.10:FF:000011">
    <property type="entry name" value="S-adenosylmethionine synthase"/>
    <property type="match status" value="1"/>
</dbReference>
<dbReference type="Gene3D" id="3.30.300.10">
    <property type="match status" value="3"/>
</dbReference>
<dbReference type="HAMAP" id="MF_00086">
    <property type="entry name" value="S_AdoMet_synth1"/>
    <property type="match status" value="1"/>
</dbReference>
<dbReference type="InterPro" id="IPR022631">
    <property type="entry name" value="ADOMET_SYNTHASE_CS"/>
</dbReference>
<dbReference type="InterPro" id="IPR022630">
    <property type="entry name" value="S-AdoMet_synt_C"/>
</dbReference>
<dbReference type="InterPro" id="IPR022629">
    <property type="entry name" value="S-AdoMet_synt_central"/>
</dbReference>
<dbReference type="InterPro" id="IPR022628">
    <property type="entry name" value="S-AdoMet_synt_N"/>
</dbReference>
<dbReference type="InterPro" id="IPR002133">
    <property type="entry name" value="S-AdoMet_synthetase"/>
</dbReference>
<dbReference type="InterPro" id="IPR022636">
    <property type="entry name" value="S-AdoMet_synthetase_sfam"/>
</dbReference>
<dbReference type="NCBIfam" id="TIGR01034">
    <property type="entry name" value="metK"/>
    <property type="match status" value="1"/>
</dbReference>
<dbReference type="PANTHER" id="PTHR11964">
    <property type="entry name" value="S-ADENOSYLMETHIONINE SYNTHETASE"/>
    <property type="match status" value="1"/>
</dbReference>
<dbReference type="Pfam" id="PF02773">
    <property type="entry name" value="S-AdoMet_synt_C"/>
    <property type="match status" value="1"/>
</dbReference>
<dbReference type="Pfam" id="PF02772">
    <property type="entry name" value="S-AdoMet_synt_M"/>
    <property type="match status" value="1"/>
</dbReference>
<dbReference type="Pfam" id="PF00438">
    <property type="entry name" value="S-AdoMet_synt_N"/>
    <property type="match status" value="1"/>
</dbReference>
<dbReference type="PIRSF" id="PIRSF000497">
    <property type="entry name" value="MAT"/>
    <property type="match status" value="1"/>
</dbReference>
<dbReference type="SUPFAM" id="SSF55973">
    <property type="entry name" value="S-adenosylmethionine synthetase"/>
    <property type="match status" value="3"/>
</dbReference>
<dbReference type="PROSITE" id="PS00376">
    <property type="entry name" value="ADOMET_SYNTHASE_1"/>
    <property type="match status" value="1"/>
</dbReference>
<dbReference type="PROSITE" id="PS00377">
    <property type="entry name" value="ADOMET_SYNTHASE_2"/>
    <property type="match status" value="1"/>
</dbReference>
<protein>
    <recommendedName>
        <fullName evidence="1">S-adenosylmethionine synthase</fullName>
        <shortName evidence="1">AdoMet synthase</shortName>
        <ecNumber evidence="1">2.5.1.6</ecNumber>
    </recommendedName>
    <alternativeName>
        <fullName evidence="1">MAT</fullName>
    </alternativeName>
    <alternativeName>
        <fullName evidence="1">Methionine adenosyltransferase</fullName>
    </alternativeName>
</protein>
<proteinExistence type="inferred from homology"/>
<evidence type="ECO:0000255" key="1">
    <source>
        <dbReference type="HAMAP-Rule" id="MF_00086"/>
    </source>
</evidence>
<feature type="chain" id="PRO_1000057562" description="S-adenosylmethionine synthase">
    <location>
        <begin position="1"/>
        <end position="395"/>
    </location>
</feature>
<feature type="region of interest" description="Flexible loop" evidence="1">
    <location>
        <begin position="100"/>
        <end position="110"/>
    </location>
</feature>
<feature type="binding site" description="in other chain" evidence="1">
    <location>
        <position position="16"/>
    </location>
    <ligand>
        <name>ATP</name>
        <dbReference type="ChEBI" id="CHEBI:30616"/>
        <note>ligand shared between two neighboring subunits</note>
    </ligand>
</feature>
<feature type="binding site" evidence="1">
    <location>
        <position position="18"/>
    </location>
    <ligand>
        <name>Mg(2+)</name>
        <dbReference type="ChEBI" id="CHEBI:18420"/>
    </ligand>
</feature>
<feature type="binding site" evidence="1">
    <location>
        <position position="44"/>
    </location>
    <ligand>
        <name>K(+)</name>
        <dbReference type="ChEBI" id="CHEBI:29103"/>
    </ligand>
</feature>
<feature type="binding site" description="in other chain" evidence="1">
    <location>
        <position position="57"/>
    </location>
    <ligand>
        <name>L-methionine</name>
        <dbReference type="ChEBI" id="CHEBI:57844"/>
        <note>ligand shared between two neighboring subunits</note>
    </ligand>
</feature>
<feature type="binding site" description="in other chain" evidence="1">
    <location>
        <position position="100"/>
    </location>
    <ligand>
        <name>L-methionine</name>
        <dbReference type="ChEBI" id="CHEBI:57844"/>
        <note>ligand shared between two neighboring subunits</note>
    </ligand>
</feature>
<feature type="binding site" description="in other chain" evidence="1">
    <location>
        <begin position="174"/>
        <end position="176"/>
    </location>
    <ligand>
        <name>ATP</name>
        <dbReference type="ChEBI" id="CHEBI:30616"/>
        <note>ligand shared between two neighboring subunits</note>
    </ligand>
</feature>
<feature type="binding site" description="in other chain" evidence="1">
    <location>
        <begin position="241"/>
        <end position="242"/>
    </location>
    <ligand>
        <name>ATP</name>
        <dbReference type="ChEBI" id="CHEBI:30616"/>
        <note>ligand shared between two neighboring subunits</note>
    </ligand>
</feature>
<feature type="binding site" evidence="1">
    <location>
        <position position="250"/>
    </location>
    <ligand>
        <name>ATP</name>
        <dbReference type="ChEBI" id="CHEBI:30616"/>
        <note>ligand shared between two neighboring subunits</note>
    </ligand>
</feature>
<feature type="binding site" evidence="1">
    <location>
        <position position="250"/>
    </location>
    <ligand>
        <name>L-methionine</name>
        <dbReference type="ChEBI" id="CHEBI:57844"/>
        <note>ligand shared between two neighboring subunits</note>
    </ligand>
</feature>
<feature type="binding site" description="in other chain" evidence="1">
    <location>
        <begin position="256"/>
        <end position="257"/>
    </location>
    <ligand>
        <name>ATP</name>
        <dbReference type="ChEBI" id="CHEBI:30616"/>
        <note>ligand shared between two neighboring subunits</note>
    </ligand>
</feature>
<feature type="binding site" evidence="1">
    <location>
        <position position="273"/>
    </location>
    <ligand>
        <name>ATP</name>
        <dbReference type="ChEBI" id="CHEBI:30616"/>
        <note>ligand shared between two neighboring subunits</note>
    </ligand>
</feature>
<feature type="binding site" evidence="1">
    <location>
        <position position="277"/>
    </location>
    <ligand>
        <name>ATP</name>
        <dbReference type="ChEBI" id="CHEBI:30616"/>
        <note>ligand shared between two neighboring subunits</note>
    </ligand>
</feature>
<feature type="binding site" description="in other chain" evidence="1">
    <location>
        <position position="281"/>
    </location>
    <ligand>
        <name>L-methionine</name>
        <dbReference type="ChEBI" id="CHEBI:57844"/>
        <note>ligand shared between two neighboring subunits</note>
    </ligand>
</feature>
<name>METK_LIMRD</name>
<keyword id="KW-0067">ATP-binding</keyword>
<keyword id="KW-0963">Cytoplasm</keyword>
<keyword id="KW-0460">Magnesium</keyword>
<keyword id="KW-0479">Metal-binding</keyword>
<keyword id="KW-0547">Nucleotide-binding</keyword>
<keyword id="KW-0554">One-carbon metabolism</keyword>
<keyword id="KW-0630">Potassium</keyword>
<keyword id="KW-1185">Reference proteome</keyword>
<keyword id="KW-0808">Transferase</keyword>
<comment type="function">
    <text evidence="1">Catalyzes the formation of S-adenosylmethionine (AdoMet) from methionine and ATP. The overall synthetic reaction is composed of two sequential steps, AdoMet formation and the subsequent tripolyphosphate hydrolysis which occurs prior to release of AdoMet from the enzyme.</text>
</comment>
<comment type="catalytic activity">
    <reaction evidence="1">
        <text>L-methionine + ATP + H2O = S-adenosyl-L-methionine + phosphate + diphosphate</text>
        <dbReference type="Rhea" id="RHEA:21080"/>
        <dbReference type="ChEBI" id="CHEBI:15377"/>
        <dbReference type="ChEBI" id="CHEBI:30616"/>
        <dbReference type="ChEBI" id="CHEBI:33019"/>
        <dbReference type="ChEBI" id="CHEBI:43474"/>
        <dbReference type="ChEBI" id="CHEBI:57844"/>
        <dbReference type="ChEBI" id="CHEBI:59789"/>
        <dbReference type="EC" id="2.5.1.6"/>
    </reaction>
</comment>
<comment type="cofactor">
    <cofactor evidence="1">
        <name>Mg(2+)</name>
        <dbReference type="ChEBI" id="CHEBI:18420"/>
    </cofactor>
    <text evidence="1">Binds 2 divalent ions per subunit.</text>
</comment>
<comment type="cofactor">
    <cofactor evidence="1">
        <name>K(+)</name>
        <dbReference type="ChEBI" id="CHEBI:29103"/>
    </cofactor>
    <text evidence="1">Binds 1 potassium ion per subunit.</text>
</comment>
<comment type="pathway">
    <text evidence="1">Amino-acid biosynthesis; S-adenosyl-L-methionine biosynthesis; S-adenosyl-L-methionine from L-methionine: step 1/1.</text>
</comment>
<comment type="subunit">
    <text evidence="1">Homotetramer; dimer of dimers.</text>
</comment>
<comment type="subcellular location">
    <subcellularLocation>
        <location evidence="1">Cytoplasm</location>
    </subcellularLocation>
</comment>
<comment type="similarity">
    <text evidence="1">Belongs to the AdoMet synthase family.</text>
</comment>
<sequence>MAERHLFTSESVSEGHPDKIADQISDAILDELLKKDPDSRVAVETSVTTGLVLVFGEVSTKAYVNIQQIVRDTIRKIGYTDGKYGFDADNCAVITAIDEQSPDIAQGVDDSLETREGEADPLDKIGAGDQGLMFGYATDETPEYMPLTLVLSHKLMRKIAQLRKDGVISYLRPDAKAEVTVEYDENDKPLRVDTVVLSTQHDPEVSLDQIKKDIKEQVIEAVIPAEYLDDQTKYFINPTGRFVIGGPQGDAGLTGRKIIVDTYGGAAHHGGGAFSGKDATKVDRSASYAARYIAKNIVAAGYAKKAEIQVAYAIGVAEPVSIMINTYGTGTRSEEELIAAVRKAFDLRPAGIIEMLDLKRPIYKQTAAYGHFGRTDVDLPWEHLDKVDELKEILG</sequence>
<accession>A5VL29</accession>